<gene>
    <name evidence="1" type="primary">ppa</name>
    <name type="ordered locus">VP0311</name>
</gene>
<feature type="chain" id="PRO_0000137538" description="Inorganic pyrophosphatase">
    <location>
        <begin position="1"/>
        <end position="176"/>
    </location>
</feature>
<feature type="binding site" evidence="1">
    <location>
        <position position="30"/>
    </location>
    <ligand>
        <name>substrate</name>
    </ligand>
</feature>
<feature type="binding site" evidence="1">
    <location>
        <position position="44"/>
    </location>
    <ligand>
        <name>substrate</name>
    </ligand>
</feature>
<feature type="binding site" evidence="1">
    <location>
        <position position="56"/>
    </location>
    <ligand>
        <name>substrate</name>
    </ligand>
</feature>
<feature type="binding site" evidence="1">
    <location>
        <position position="66"/>
    </location>
    <ligand>
        <name>Mg(2+)</name>
        <dbReference type="ChEBI" id="CHEBI:18420"/>
        <label>1</label>
    </ligand>
</feature>
<feature type="binding site" evidence="1">
    <location>
        <position position="71"/>
    </location>
    <ligand>
        <name>Mg(2+)</name>
        <dbReference type="ChEBI" id="CHEBI:18420"/>
        <label>1</label>
    </ligand>
</feature>
<feature type="binding site" evidence="1">
    <location>
        <position position="71"/>
    </location>
    <ligand>
        <name>Mg(2+)</name>
        <dbReference type="ChEBI" id="CHEBI:18420"/>
        <label>2</label>
    </ligand>
</feature>
<feature type="binding site" evidence="1">
    <location>
        <position position="103"/>
    </location>
    <ligand>
        <name>Mg(2+)</name>
        <dbReference type="ChEBI" id="CHEBI:18420"/>
        <label>1</label>
    </ligand>
</feature>
<feature type="binding site" evidence="1">
    <location>
        <position position="142"/>
    </location>
    <ligand>
        <name>substrate</name>
    </ligand>
</feature>
<dbReference type="EC" id="3.6.1.1" evidence="1"/>
<dbReference type="EMBL" id="BA000031">
    <property type="protein sequence ID" value="BAC58574.1"/>
    <property type="molecule type" value="Genomic_DNA"/>
</dbReference>
<dbReference type="RefSeq" id="NP_796690.1">
    <property type="nucleotide sequence ID" value="NC_004603.1"/>
</dbReference>
<dbReference type="RefSeq" id="WP_005454643.1">
    <property type="nucleotide sequence ID" value="NC_004603.1"/>
</dbReference>
<dbReference type="SMR" id="Q87SW1"/>
<dbReference type="GeneID" id="1187778"/>
<dbReference type="KEGG" id="vpa:VP0311"/>
<dbReference type="PATRIC" id="fig|223926.6.peg.300"/>
<dbReference type="eggNOG" id="COG0221">
    <property type="taxonomic scope" value="Bacteria"/>
</dbReference>
<dbReference type="HOGENOM" id="CLU_073198_1_0_6"/>
<dbReference type="Proteomes" id="UP000002493">
    <property type="component" value="Chromosome 1"/>
</dbReference>
<dbReference type="GO" id="GO:0005737">
    <property type="term" value="C:cytoplasm"/>
    <property type="evidence" value="ECO:0007669"/>
    <property type="project" value="UniProtKB-SubCell"/>
</dbReference>
<dbReference type="GO" id="GO:0004427">
    <property type="term" value="F:inorganic diphosphate phosphatase activity"/>
    <property type="evidence" value="ECO:0007669"/>
    <property type="project" value="UniProtKB-UniRule"/>
</dbReference>
<dbReference type="GO" id="GO:0000287">
    <property type="term" value="F:magnesium ion binding"/>
    <property type="evidence" value="ECO:0007669"/>
    <property type="project" value="UniProtKB-UniRule"/>
</dbReference>
<dbReference type="GO" id="GO:0006796">
    <property type="term" value="P:phosphate-containing compound metabolic process"/>
    <property type="evidence" value="ECO:0007669"/>
    <property type="project" value="InterPro"/>
</dbReference>
<dbReference type="CDD" id="cd00412">
    <property type="entry name" value="pyrophosphatase"/>
    <property type="match status" value="1"/>
</dbReference>
<dbReference type="FunFam" id="3.90.80.10:FF:000001">
    <property type="entry name" value="Inorganic pyrophosphatase"/>
    <property type="match status" value="1"/>
</dbReference>
<dbReference type="Gene3D" id="3.90.80.10">
    <property type="entry name" value="Inorganic pyrophosphatase"/>
    <property type="match status" value="1"/>
</dbReference>
<dbReference type="HAMAP" id="MF_00209">
    <property type="entry name" value="Inorganic_PPase"/>
    <property type="match status" value="1"/>
</dbReference>
<dbReference type="InterPro" id="IPR008162">
    <property type="entry name" value="Pyrophosphatase"/>
</dbReference>
<dbReference type="InterPro" id="IPR036649">
    <property type="entry name" value="Pyrophosphatase_sf"/>
</dbReference>
<dbReference type="NCBIfam" id="NF002317">
    <property type="entry name" value="PRK01250.1"/>
    <property type="match status" value="1"/>
</dbReference>
<dbReference type="PANTHER" id="PTHR10286">
    <property type="entry name" value="INORGANIC PYROPHOSPHATASE"/>
    <property type="match status" value="1"/>
</dbReference>
<dbReference type="Pfam" id="PF00719">
    <property type="entry name" value="Pyrophosphatase"/>
    <property type="match status" value="1"/>
</dbReference>
<dbReference type="SUPFAM" id="SSF50324">
    <property type="entry name" value="Inorganic pyrophosphatase"/>
    <property type="match status" value="1"/>
</dbReference>
<dbReference type="PROSITE" id="PS00387">
    <property type="entry name" value="PPASE"/>
    <property type="match status" value="1"/>
</dbReference>
<proteinExistence type="inferred from homology"/>
<protein>
    <recommendedName>
        <fullName evidence="1">Inorganic pyrophosphatase</fullName>
        <ecNumber evidence="1">3.6.1.1</ecNumber>
    </recommendedName>
    <alternativeName>
        <fullName evidence="1">Pyrophosphate phospho-hydrolase</fullName>
        <shortName evidence="1">PPase</shortName>
    </alternativeName>
</protein>
<accession>Q87SW1</accession>
<evidence type="ECO:0000255" key="1">
    <source>
        <dbReference type="HAMAP-Rule" id="MF_00209"/>
    </source>
</evidence>
<reference key="1">
    <citation type="journal article" date="2003" name="Lancet">
        <title>Genome sequence of Vibrio parahaemolyticus: a pathogenic mechanism distinct from that of V. cholerae.</title>
        <authorList>
            <person name="Makino K."/>
            <person name="Oshima K."/>
            <person name="Kurokawa K."/>
            <person name="Yokoyama K."/>
            <person name="Uda T."/>
            <person name="Tagomori K."/>
            <person name="Iijima Y."/>
            <person name="Najima M."/>
            <person name="Nakano M."/>
            <person name="Yamashita A."/>
            <person name="Kubota Y."/>
            <person name="Kimura S."/>
            <person name="Yasunaga T."/>
            <person name="Honda T."/>
            <person name="Shinagawa H."/>
            <person name="Hattori M."/>
            <person name="Iida T."/>
        </authorList>
    </citation>
    <scope>NUCLEOTIDE SEQUENCE [LARGE SCALE GENOMIC DNA]</scope>
    <source>
        <strain>RIMD 2210633</strain>
    </source>
</reference>
<name>IPYR_VIBPA</name>
<keyword id="KW-0963">Cytoplasm</keyword>
<keyword id="KW-0378">Hydrolase</keyword>
<keyword id="KW-0460">Magnesium</keyword>
<keyword id="KW-0479">Metal-binding</keyword>
<comment type="function">
    <text evidence="1">Catalyzes the hydrolysis of inorganic pyrophosphate (PPi) forming two phosphate ions.</text>
</comment>
<comment type="catalytic activity">
    <reaction evidence="1">
        <text>diphosphate + H2O = 2 phosphate + H(+)</text>
        <dbReference type="Rhea" id="RHEA:24576"/>
        <dbReference type="ChEBI" id="CHEBI:15377"/>
        <dbReference type="ChEBI" id="CHEBI:15378"/>
        <dbReference type="ChEBI" id="CHEBI:33019"/>
        <dbReference type="ChEBI" id="CHEBI:43474"/>
        <dbReference type="EC" id="3.6.1.1"/>
    </reaction>
</comment>
<comment type="cofactor">
    <cofactor evidence="1">
        <name>Mg(2+)</name>
        <dbReference type="ChEBI" id="CHEBI:18420"/>
    </cofactor>
</comment>
<comment type="subunit">
    <text evidence="1">Homohexamer.</text>
</comment>
<comment type="subcellular location">
    <subcellularLocation>
        <location evidence="1">Cytoplasm</location>
    </subcellularLocation>
</comment>
<comment type="similarity">
    <text evidence="1">Belongs to the PPase family.</text>
</comment>
<organism>
    <name type="scientific">Vibrio parahaemolyticus serotype O3:K6 (strain RIMD 2210633)</name>
    <dbReference type="NCBI Taxonomy" id="223926"/>
    <lineage>
        <taxon>Bacteria</taxon>
        <taxon>Pseudomonadati</taxon>
        <taxon>Pseudomonadota</taxon>
        <taxon>Gammaproteobacteria</taxon>
        <taxon>Vibrionales</taxon>
        <taxon>Vibrionaceae</taxon>
        <taxon>Vibrio</taxon>
    </lineage>
</organism>
<sequence>MSLNHVPAGKSLPEDIYVVIEIPANADPIKYEVDKDSGAVFVDRFMSAPMFYPCNYGYVNNTLSLDGDPVDVLVPTPYPLMPGSVIRCRPVGVLKMTDESGEDAKVVAVPHSKISKEYEHIQDVGDIPELLKAQITHFFERYKELESGKWVKVDGWADVEAAKAEILQSYERAQNK</sequence>